<evidence type="ECO:0000250" key="1"/>
<evidence type="ECO:0000255" key="2">
    <source>
        <dbReference type="PROSITE-ProRule" id="PRU00316"/>
    </source>
</evidence>
<evidence type="ECO:0000256" key="3">
    <source>
        <dbReference type="SAM" id="MobiDB-lite"/>
    </source>
</evidence>
<evidence type="ECO:0000269" key="4">
    <source>
    </source>
</evidence>
<evidence type="ECO:0000269" key="5">
    <source>
    </source>
</evidence>
<evidence type="ECO:0000269" key="6">
    <source>
    </source>
</evidence>
<evidence type="ECO:0000303" key="7">
    <source>
    </source>
</evidence>
<evidence type="ECO:0000305" key="8"/>
<evidence type="ECO:0007829" key="9">
    <source>
        <dbReference type="PDB" id="7O6V"/>
    </source>
</evidence>
<keyword id="KW-0002">3D-structure</keyword>
<keyword id="KW-0025">Alternative splicing</keyword>
<keyword id="KW-0238">DNA-binding</keyword>
<keyword id="KW-0287">Flowering</keyword>
<keyword id="KW-0479">Metal-binding</keyword>
<keyword id="KW-0539">Nucleus</keyword>
<keyword id="KW-1185">Reference proteome</keyword>
<keyword id="KW-0678">Repressor</keyword>
<keyword id="KW-0346">Stress response</keyword>
<keyword id="KW-0804">Transcription</keyword>
<keyword id="KW-0805">Transcription regulation</keyword>
<keyword id="KW-0862">Zinc</keyword>
<keyword id="KW-0863">Zinc-finger</keyword>
<name>VIL2_ARATH</name>
<sequence length="714" mass="78770">MDSSLDGAAGDSSKCSEMSVDEKRQLVYELSKQSHLAAEVLQAWSRQEILQILCAEMGKERKYTGLTKVKIIETLLKIVSEKNSGECEGKKRDSDCLPIQRNTKRQRKVDNPSRYVIPATNIVTSNNASGSCSSVNTKGESTTIYCKNLACRAVLRQEDSFCRRCSCCICRKYDDNKDPSLWLTCSSDPPFEGESCGFSCHLECAFNTEKSGLGKDKQSEGCCFYCVSCGKANSLLECWKKQLTIAKETRRVEVLCYRLFLVQKLLKSSTKYRNLCEVVDEAVKTLEADVGPLTGLPMKMGRGIVNRLHSGPDVQKLCSSALESLETIATTPPDVAALPSPRSSKMQQDCSYVLSNEISADTATTGSTKIRFEDVNATSLTVVLASNEIPSPPNIVHYSIWHRKVPEKDYPEKSTCTLFIPNTRFVVSGLAPASEYCFKVVSYSGTREMGVDEINVLTRSAEEGANCSSAVERSVSPLTNCSTLSSNPSSVEAESNNDYIVPKKPSSKNEDNNSPSVDESAAKRMKRTTDSDIVQIEKDVEQIVLLDDEEQEAVLDKTESETPVVVTTKSLVGNRNSSDASLPITPFRSDEIKNRQARIEISMKDNCNNGDHSANGGTESGLEHCVKIIRQLECSGHIDKNFRQKFLTWYSLRATSQEIRVVKIFIDTFIDDPMALAEQLIDTFDDRVSIKRSAVGGSGASAVVPSGFCMKLWH</sequence>
<organism>
    <name type="scientific">Arabidopsis thaliana</name>
    <name type="common">Mouse-ear cress</name>
    <dbReference type="NCBI Taxonomy" id="3702"/>
    <lineage>
        <taxon>Eukaryota</taxon>
        <taxon>Viridiplantae</taxon>
        <taxon>Streptophyta</taxon>
        <taxon>Embryophyta</taxon>
        <taxon>Tracheophyta</taxon>
        <taxon>Spermatophyta</taxon>
        <taxon>Magnoliopsida</taxon>
        <taxon>eudicotyledons</taxon>
        <taxon>Gunneridae</taxon>
        <taxon>Pentapetalae</taxon>
        <taxon>rosids</taxon>
        <taxon>malvids</taxon>
        <taxon>Brassicales</taxon>
        <taxon>Brassicaceae</taxon>
        <taxon>Camelineae</taxon>
        <taxon>Arabidopsis</taxon>
    </lineage>
</organism>
<protein>
    <recommendedName>
        <fullName>VIN3-like protein 2</fullName>
    </recommendedName>
    <alternativeName>
        <fullName>Vernalization5/VIN3-like protein 1</fullName>
    </alternativeName>
</protein>
<accession>Q9SUM4</accession>
<accession>B9DFL9</accession>
<accession>F4JPJ8</accession>
<accession>F4JPK1</accession>
<accession>Q2QJG1</accession>
<accession>Q8GUH6</accession>
<feature type="chain" id="PRO_0000422540" description="VIN3-like protein 2">
    <location>
        <begin position="1"/>
        <end position="714"/>
    </location>
</feature>
<feature type="domain" description="Fibronectin type-III" evidence="2">
    <location>
        <begin position="366"/>
        <end position="463"/>
    </location>
</feature>
<feature type="zinc finger region" description="PHD-type">
    <location>
        <begin position="164"/>
        <end position="232"/>
    </location>
</feature>
<feature type="region of interest" description="Disordered" evidence="3">
    <location>
        <begin position="478"/>
        <end position="530"/>
    </location>
</feature>
<feature type="region of interest" description="VIN3-Interacting Domain (VID)" evidence="1">
    <location>
        <begin position="602"/>
        <end position="714"/>
    </location>
</feature>
<feature type="short sequence motif" description="Nuclear localization signal" evidence="1">
    <location>
        <begin position="239"/>
        <end position="246"/>
    </location>
</feature>
<feature type="compositionally biased region" description="Polar residues" evidence="3">
    <location>
        <begin position="478"/>
        <end position="498"/>
    </location>
</feature>
<feature type="splice variant" id="VSP_046533" description="In isoform 2." evidence="7">
    <location>
        <begin position="1"/>
        <end position="17"/>
    </location>
</feature>
<feature type="splice variant" id="VSP_046534" description="In isoform 2 and isoform 3." evidence="7">
    <location>
        <begin position="349"/>
        <end position="360"/>
    </location>
</feature>
<feature type="splice variant" id="VSP_046535" description="In isoform 4." evidence="8">
    <original>SGLEH</original>
    <variation>ISDLV</variation>
    <location>
        <begin position="620"/>
        <end position="624"/>
    </location>
</feature>
<feature type="splice variant" id="VSP_046536" description="In isoform 4." evidence="8">
    <location>
        <begin position="625"/>
        <end position="714"/>
    </location>
</feature>
<feature type="mutagenesis site" description="Abolished histone-binding." evidence="6">
    <original>W</original>
    <variation>A</variation>
    <location>
        <position position="182"/>
    </location>
</feature>
<feature type="mutagenesis site" description="Abolished histone-binding." evidence="6">
    <original>C</original>
    <variation>A</variation>
    <location>
        <position position="204"/>
    </location>
</feature>
<feature type="sequence conflict" description="In Ref. 6; BAH19536." evidence="8" ref="6">
    <original>A</original>
    <variation>T</variation>
    <location>
        <position position="119"/>
    </location>
</feature>
<feature type="helix" evidence="9">
    <location>
        <begin position="621"/>
        <end position="634"/>
    </location>
</feature>
<feature type="helix" evidence="9">
    <location>
        <begin position="640"/>
        <end position="652"/>
    </location>
</feature>
<feature type="helix" evidence="9">
    <location>
        <begin position="656"/>
        <end position="668"/>
    </location>
</feature>
<feature type="turn" evidence="9">
    <location>
        <begin position="669"/>
        <end position="671"/>
    </location>
</feature>
<feature type="helix" evidence="9">
    <location>
        <begin position="673"/>
        <end position="688"/>
    </location>
</feature>
<proteinExistence type="evidence at protein level"/>
<reference key="1">
    <citation type="submission" date="2000-11" db="EMBL/GenBank/DDBJ databases">
        <title>Arabidopsis thaliana AT4g30200 gene for nuclear coiled-coil protein.</title>
        <authorList>
            <person name="Itoh R."/>
        </authorList>
    </citation>
    <scope>NUCLEOTIDE SEQUENCE [MRNA] (ISOFORM 1)</scope>
    <source>
        <strain>cv. Columbia</strain>
    </source>
</reference>
<reference key="2">
    <citation type="journal article" date="2006" name="Genes Dev.">
        <title>A PHD finger protein involved in both the vernalization and photoperiod pathways in Arabidopsis.</title>
        <authorList>
            <person name="Sung S."/>
            <person name="Schmitz R.J."/>
            <person name="Amasino R.M."/>
        </authorList>
    </citation>
    <scope>NUCLEOTIDE SEQUENCE [MRNA] (ISOFORM 1)</scope>
    <scope>SUBUNIT</scope>
    <scope>INTERACTION WITH VIN3 AND VIL1</scope>
    <scope>INDUCTION BY COLD</scope>
    <source>
        <strain>cv. Columbia</strain>
    </source>
</reference>
<reference key="3">
    <citation type="journal article" date="1999" name="Nature">
        <title>Sequence and analysis of chromosome 4 of the plant Arabidopsis thaliana.</title>
        <authorList>
            <person name="Mayer K.F.X."/>
            <person name="Schueller C."/>
            <person name="Wambutt R."/>
            <person name="Murphy G."/>
            <person name="Volckaert G."/>
            <person name="Pohl T."/>
            <person name="Duesterhoeft A."/>
            <person name="Stiekema W."/>
            <person name="Entian K.-D."/>
            <person name="Terryn N."/>
            <person name="Harris B."/>
            <person name="Ansorge W."/>
            <person name="Brandt P."/>
            <person name="Grivell L.A."/>
            <person name="Rieger M."/>
            <person name="Weichselgartner M."/>
            <person name="de Simone V."/>
            <person name="Obermaier B."/>
            <person name="Mache R."/>
            <person name="Mueller M."/>
            <person name="Kreis M."/>
            <person name="Delseny M."/>
            <person name="Puigdomenech P."/>
            <person name="Watson M."/>
            <person name="Schmidtheini T."/>
            <person name="Reichert B."/>
            <person name="Portetelle D."/>
            <person name="Perez-Alonso M."/>
            <person name="Boutry M."/>
            <person name="Bancroft I."/>
            <person name="Vos P."/>
            <person name="Hoheisel J."/>
            <person name="Zimmermann W."/>
            <person name="Wedler H."/>
            <person name="Ridley P."/>
            <person name="Langham S.-A."/>
            <person name="McCullagh B."/>
            <person name="Bilham L."/>
            <person name="Robben J."/>
            <person name="van der Schueren J."/>
            <person name="Grymonprez B."/>
            <person name="Chuang Y.-J."/>
            <person name="Vandenbussche F."/>
            <person name="Braeken M."/>
            <person name="Weltjens I."/>
            <person name="Voet M."/>
            <person name="Bastiaens I."/>
            <person name="Aert R."/>
            <person name="Defoor E."/>
            <person name="Weitzenegger T."/>
            <person name="Bothe G."/>
            <person name="Ramsperger U."/>
            <person name="Hilbert H."/>
            <person name="Braun M."/>
            <person name="Holzer E."/>
            <person name="Brandt A."/>
            <person name="Peters S."/>
            <person name="van Staveren M."/>
            <person name="Dirkse W."/>
            <person name="Mooijman P."/>
            <person name="Klein Lankhorst R."/>
            <person name="Rose M."/>
            <person name="Hauf J."/>
            <person name="Koetter P."/>
            <person name="Berneiser S."/>
            <person name="Hempel S."/>
            <person name="Feldpausch M."/>
            <person name="Lamberth S."/>
            <person name="Van den Daele H."/>
            <person name="De Keyser A."/>
            <person name="Buysshaert C."/>
            <person name="Gielen J."/>
            <person name="Villarroel R."/>
            <person name="De Clercq R."/>
            <person name="van Montagu M."/>
            <person name="Rogers J."/>
            <person name="Cronin A."/>
            <person name="Quail M.A."/>
            <person name="Bray-Allen S."/>
            <person name="Clark L."/>
            <person name="Doggett J."/>
            <person name="Hall S."/>
            <person name="Kay M."/>
            <person name="Lennard N."/>
            <person name="McLay K."/>
            <person name="Mayes R."/>
            <person name="Pettett A."/>
            <person name="Rajandream M.A."/>
            <person name="Lyne M."/>
            <person name="Benes V."/>
            <person name="Rechmann S."/>
            <person name="Borkova D."/>
            <person name="Bloecker H."/>
            <person name="Scharfe M."/>
            <person name="Grimm M."/>
            <person name="Loehnert T.-H."/>
            <person name="Dose S."/>
            <person name="de Haan M."/>
            <person name="Maarse A.C."/>
            <person name="Schaefer M."/>
            <person name="Mueller-Auer S."/>
            <person name="Gabel C."/>
            <person name="Fuchs M."/>
            <person name="Fartmann B."/>
            <person name="Granderath K."/>
            <person name="Dauner D."/>
            <person name="Herzl A."/>
            <person name="Neumann S."/>
            <person name="Argiriou A."/>
            <person name="Vitale D."/>
            <person name="Liguori R."/>
            <person name="Piravandi E."/>
            <person name="Massenet O."/>
            <person name="Quigley F."/>
            <person name="Clabauld G."/>
            <person name="Muendlein A."/>
            <person name="Felber R."/>
            <person name="Schnabl S."/>
            <person name="Hiller R."/>
            <person name="Schmidt W."/>
            <person name="Lecharny A."/>
            <person name="Aubourg S."/>
            <person name="Chefdor F."/>
            <person name="Cooke R."/>
            <person name="Berger C."/>
            <person name="Monfort A."/>
            <person name="Casacuberta E."/>
            <person name="Gibbons T."/>
            <person name="Weber N."/>
            <person name="Vandenbol M."/>
            <person name="Bargues M."/>
            <person name="Terol J."/>
            <person name="Torres A."/>
            <person name="Perez-Perez A."/>
            <person name="Purnelle B."/>
            <person name="Bent E."/>
            <person name="Johnson S."/>
            <person name="Tacon D."/>
            <person name="Jesse T."/>
            <person name="Heijnen L."/>
            <person name="Schwarz S."/>
            <person name="Scholler P."/>
            <person name="Heber S."/>
            <person name="Francs P."/>
            <person name="Bielke C."/>
            <person name="Frishman D."/>
            <person name="Haase D."/>
            <person name="Lemcke K."/>
            <person name="Mewes H.-W."/>
            <person name="Stocker S."/>
            <person name="Zaccaria P."/>
            <person name="Bevan M."/>
            <person name="Wilson R.K."/>
            <person name="de la Bastide M."/>
            <person name="Habermann K."/>
            <person name="Parnell L."/>
            <person name="Dedhia N."/>
            <person name="Gnoj L."/>
            <person name="Schutz K."/>
            <person name="Huang E."/>
            <person name="Spiegel L."/>
            <person name="Sekhon M."/>
            <person name="Murray J."/>
            <person name="Sheet P."/>
            <person name="Cordes M."/>
            <person name="Abu-Threideh J."/>
            <person name="Stoneking T."/>
            <person name="Kalicki J."/>
            <person name="Graves T."/>
            <person name="Harmon G."/>
            <person name="Edwards J."/>
            <person name="Latreille P."/>
            <person name="Courtney L."/>
            <person name="Cloud J."/>
            <person name="Abbott A."/>
            <person name="Scott K."/>
            <person name="Johnson D."/>
            <person name="Minx P."/>
            <person name="Bentley D."/>
            <person name="Fulton B."/>
            <person name="Miller N."/>
            <person name="Greco T."/>
            <person name="Kemp K."/>
            <person name="Kramer J."/>
            <person name="Fulton L."/>
            <person name="Mardis E."/>
            <person name="Dante M."/>
            <person name="Pepin K."/>
            <person name="Hillier L.W."/>
            <person name="Nelson J."/>
            <person name="Spieth J."/>
            <person name="Ryan E."/>
            <person name="Andrews S."/>
            <person name="Geisel C."/>
            <person name="Layman D."/>
            <person name="Du H."/>
            <person name="Ali J."/>
            <person name="Berghoff A."/>
            <person name="Jones K."/>
            <person name="Drone K."/>
            <person name="Cotton M."/>
            <person name="Joshu C."/>
            <person name="Antonoiu B."/>
            <person name="Zidanic M."/>
            <person name="Strong C."/>
            <person name="Sun H."/>
            <person name="Lamar B."/>
            <person name="Yordan C."/>
            <person name="Ma P."/>
            <person name="Zhong J."/>
            <person name="Preston R."/>
            <person name="Vil D."/>
            <person name="Shekher M."/>
            <person name="Matero A."/>
            <person name="Shah R."/>
            <person name="Swaby I.K."/>
            <person name="O'Shaughnessy A."/>
            <person name="Rodriguez M."/>
            <person name="Hoffman J."/>
            <person name="Till S."/>
            <person name="Granat S."/>
            <person name="Shohdy N."/>
            <person name="Hasegawa A."/>
            <person name="Hameed A."/>
            <person name="Lodhi M."/>
            <person name="Johnson A."/>
            <person name="Chen E."/>
            <person name="Marra M.A."/>
            <person name="Martienssen R."/>
            <person name="McCombie W.R."/>
        </authorList>
    </citation>
    <scope>NUCLEOTIDE SEQUENCE [LARGE SCALE GENOMIC DNA]</scope>
    <source>
        <strain>cv. Columbia</strain>
    </source>
</reference>
<reference key="4">
    <citation type="journal article" date="2017" name="Plant J.">
        <title>Araport11: a complete reannotation of the Arabidopsis thaliana reference genome.</title>
        <authorList>
            <person name="Cheng C.Y."/>
            <person name="Krishnakumar V."/>
            <person name="Chan A.P."/>
            <person name="Thibaud-Nissen F."/>
            <person name="Schobel S."/>
            <person name="Town C.D."/>
        </authorList>
    </citation>
    <scope>GENOME REANNOTATION</scope>
    <source>
        <strain>cv. Columbia</strain>
    </source>
</reference>
<reference key="5">
    <citation type="journal article" date="2003" name="Science">
        <title>Empirical analysis of transcriptional activity in the Arabidopsis genome.</title>
        <authorList>
            <person name="Yamada K."/>
            <person name="Lim J."/>
            <person name="Dale J.M."/>
            <person name="Chen H."/>
            <person name="Shinn P."/>
            <person name="Palm C.J."/>
            <person name="Southwick A.M."/>
            <person name="Wu H.C."/>
            <person name="Kim C.J."/>
            <person name="Nguyen M."/>
            <person name="Pham P.K."/>
            <person name="Cheuk R.F."/>
            <person name="Karlin-Newmann G."/>
            <person name="Liu S.X."/>
            <person name="Lam B."/>
            <person name="Sakano H."/>
            <person name="Wu T."/>
            <person name="Yu G."/>
            <person name="Miranda M."/>
            <person name="Quach H.L."/>
            <person name="Tripp M."/>
            <person name="Chang C.H."/>
            <person name="Lee J.M."/>
            <person name="Toriumi M.J."/>
            <person name="Chan M.M."/>
            <person name="Tang C.C."/>
            <person name="Onodera C.S."/>
            <person name="Deng J.M."/>
            <person name="Akiyama K."/>
            <person name="Ansari Y."/>
            <person name="Arakawa T."/>
            <person name="Banh J."/>
            <person name="Banno F."/>
            <person name="Bowser L."/>
            <person name="Brooks S.Y."/>
            <person name="Carninci P."/>
            <person name="Chao Q."/>
            <person name="Choy N."/>
            <person name="Enju A."/>
            <person name="Goldsmith A.D."/>
            <person name="Gurjal M."/>
            <person name="Hansen N.F."/>
            <person name="Hayashizaki Y."/>
            <person name="Johnson-Hopson C."/>
            <person name="Hsuan V.W."/>
            <person name="Iida K."/>
            <person name="Karnes M."/>
            <person name="Khan S."/>
            <person name="Koesema E."/>
            <person name="Ishida J."/>
            <person name="Jiang P.X."/>
            <person name="Jones T."/>
            <person name="Kawai J."/>
            <person name="Kamiya A."/>
            <person name="Meyers C."/>
            <person name="Nakajima M."/>
            <person name="Narusaka M."/>
            <person name="Seki M."/>
            <person name="Sakurai T."/>
            <person name="Satou M."/>
            <person name="Tamse R."/>
            <person name="Vaysberg M."/>
            <person name="Wallender E.K."/>
            <person name="Wong C."/>
            <person name="Yamamura Y."/>
            <person name="Yuan S."/>
            <person name="Shinozaki K."/>
            <person name="Davis R.W."/>
            <person name="Theologis A."/>
            <person name="Ecker J.R."/>
        </authorList>
    </citation>
    <scope>NUCLEOTIDE SEQUENCE [LARGE SCALE MRNA] (ISOFORM 2)</scope>
    <source>
        <strain>cv. Columbia</strain>
    </source>
</reference>
<reference key="6">
    <citation type="journal article" date="2009" name="DNA Res.">
        <title>Analysis of multiple occurrences of alternative splicing events in Arabidopsis thaliana using novel sequenced full-length cDNAs.</title>
        <authorList>
            <person name="Iida K."/>
            <person name="Fukami-Kobayashi K."/>
            <person name="Toyoda A."/>
            <person name="Sakaki Y."/>
            <person name="Kobayashi M."/>
            <person name="Seki M."/>
            <person name="Shinozaki K."/>
        </authorList>
    </citation>
    <scope>NUCLEOTIDE SEQUENCE [LARGE SCALE MRNA] OF 1-266 (ISOFORMS 1/3/4)</scope>
    <source>
        <strain>cv. Columbia</strain>
        <tissue>Rosette leaf</tissue>
    </source>
</reference>
<reference key="7">
    <citation type="journal article" date="2005" name="Cell Res.">
        <title>Identification and characterization of GIP1, an Arabidopsis thaliana protein that enhances the DNA binding affinity and reduces the oligomeric state of G-box binding factors.</title>
        <authorList>
            <person name="Sehnke P.C."/>
            <person name="Laughner B.J."/>
            <person name="Lyerly Linebarger C.R."/>
            <person name="Gurley W.B."/>
            <person name="Ferl R.J."/>
        </authorList>
    </citation>
    <scope>NUCLEOTIDE SEQUENCE [MRNA] OF 503-713 (ISOFORMS 1/2/3)</scope>
</reference>
<reference key="8">
    <citation type="journal article" date="2008" name="Proc. Natl. Acad. Sci. U.S.A.">
        <title>A PHD-polycomb repressive complex 2 triggers the epigenetic silencing of FLC during vernalization.</title>
        <authorList>
            <person name="De Lucia F."/>
            <person name="Crevillen P."/>
            <person name="Jones A.M.E."/>
            <person name="Greb T."/>
            <person name="Dean C."/>
        </authorList>
    </citation>
    <scope>SUBUNIT</scope>
    <scope>IDENTIFICATION BY MASS SPECTROMETRY</scope>
</reference>
<reference key="9">
    <citation type="journal article" date="2010" name="Proc. Natl. Acad. Sci. U.S.A.">
        <title>The plant homeo domain finger protein, VIN3-LIKE 2, is necessary for photoperiod-mediated epigenetic regulation of the floral repressor, MAF5.</title>
        <authorList>
            <person name="Kim D.-H."/>
            <person name="Sung S."/>
        </authorList>
    </citation>
    <scope>FUNCTION</scope>
    <scope>DISRUPTION PHENOTYPE</scope>
    <scope>MUTAGENESIS OF TRP-182 AND CYS-204</scope>
    <scope>INDUCTION BY PHOTOPERIODISM</scope>
</reference>
<reference key="10">
    <citation type="journal article" date="2010" name="Plant Signal. Behav.">
        <title>Role of VIN3-LIKE 2 in facultative photoperiodic flowering response in Arabidopsis.</title>
        <authorList>
            <person name="Kim D.-H."/>
            <person name="Sung S."/>
        </authorList>
    </citation>
    <scope>REVIEW</scope>
</reference>
<comment type="function">
    <text evidence="6">Maybe involved in both the vernalization and photoperiod pathways by regulating gene expression. Binds preferentially to dimethylated histone H3 'Lys-9' (H3K9me2). Promotes flowering in non-inductive photoperiods (e.g. short days) through the maintenance of the epigenetically repressed state of MAF5 via H3K9me2 and plant homeodomain / polycomb repressive complex 2 (PHD-PRC2)-dependent H3K27me3.</text>
</comment>
<comment type="subunit">
    <text evidence="4 5">Self-interacts. Interacts with VIN3 and VIL1. Component of the plant homeodomain / polycomb repressive complex 2 (PHD-PRC2) large complex during prolonged cold, composed of core PRC2 components (VRN2, EZA1, FIE and MSI1), and three related PHD finger proteins (VIL1, VIL2 and VIN3) that mediates histone H3 trimethylation on 'Lys-27' (H3K27me3).</text>
</comment>
<comment type="subcellular location">
    <subcellularLocation>
        <location evidence="1">Nucleus</location>
    </subcellularLocation>
    <text evidence="1">Probably DNA-associated.</text>
</comment>
<comment type="alternative products">
    <event type="alternative splicing"/>
    <isoform>
        <id>Q9SUM4-1</id>
        <name>1</name>
        <sequence type="displayed"/>
    </isoform>
    <isoform>
        <id>Q9SUM4-2</id>
        <name>2</name>
        <sequence type="described" ref="VSP_046533 VSP_046534"/>
    </isoform>
    <isoform>
        <id>Q9SUM4-3</id>
        <name>3</name>
        <sequence type="described" ref="VSP_046534"/>
    </isoform>
    <isoform>
        <id>Q9SUM4-4</id>
        <name>4</name>
        <sequence type="described" ref="VSP_046535 VSP_046536"/>
    </isoform>
</comment>
<comment type="induction">
    <text evidence="4 6">By cold (e.g. 4 degrees Celsius). Levels follow a diurnal regulation with an accumulation during the dark period and reduced levels upon exposure to light (at protein level).</text>
</comment>
<comment type="disruption phenotype">
    <text evidence="6">Delayed flowering in short days but not in long days conditions, associated with high expression of MAF5, a floral repressor, due to a reduced H3K9me2 status of MAF5 locus.</text>
</comment>
<dbReference type="EMBL" id="AB050977">
    <property type="protein sequence ID" value="BAB17836.1"/>
    <property type="molecule type" value="mRNA"/>
</dbReference>
<dbReference type="EMBL" id="EF064792">
    <property type="protein sequence ID" value="ABL01539.1"/>
    <property type="molecule type" value="mRNA"/>
</dbReference>
<dbReference type="EMBL" id="AL109796">
    <property type="protein sequence ID" value="CAB52464.1"/>
    <property type="molecule type" value="Genomic_DNA"/>
</dbReference>
<dbReference type="EMBL" id="AL161576">
    <property type="protein sequence ID" value="CAB81013.1"/>
    <property type="molecule type" value="Genomic_DNA"/>
</dbReference>
<dbReference type="EMBL" id="CP002687">
    <property type="protein sequence ID" value="AEE85733.1"/>
    <property type="molecule type" value="Genomic_DNA"/>
</dbReference>
<dbReference type="EMBL" id="CP002687">
    <property type="protein sequence ID" value="AEE85734.1"/>
    <property type="molecule type" value="Genomic_DNA"/>
</dbReference>
<dbReference type="EMBL" id="CP002687">
    <property type="protein sequence ID" value="AEE85735.1"/>
    <property type="molecule type" value="Genomic_DNA"/>
</dbReference>
<dbReference type="EMBL" id="CP002687">
    <property type="protein sequence ID" value="AEE85736.1"/>
    <property type="molecule type" value="Genomic_DNA"/>
</dbReference>
<dbReference type="EMBL" id="BT002499">
    <property type="protein sequence ID" value="AAO00859.1"/>
    <property type="molecule type" value="mRNA"/>
</dbReference>
<dbReference type="EMBL" id="BT008428">
    <property type="protein sequence ID" value="AAP37787.1"/>
    <property type="molecule type" value="mRNA"/>
</dbReference>
<dbReference type="EMBL" id="AK316824">
    <property type="protein sequence ID" value="BAH19536.1"/>
    <property type="molecule type" value="mRNA"/>
</dbReference>
<dbReference type="EMBL" id="DQ067323">
    <property type="protein sequence ID" value="AAZ30055.1"/>
    <property type="molecule type" value="mRNA"/>
</dbReference>
<dbReference type="PIR" id="T14080">
    <property type="entry name" value="T14080"/>
</dbReference>
<dbReference type="RefSeq" id="NP_001190871.1">
    <molecule id="Q9SUM4-4"/>
    <property type="nucleotide sequence ID" value="NM_001203942.1"/>
</dbReference>
<dbReference type="RefSeq" id="NP_194749.1">
    <molecule id="Q9SUM4-1"/>
    <property type="nucleotide sequence ID" value="NM_119166.5"/>
</dbReference>
<dbReference type="RefSeq" id="NP_849471.1">
    <molecule id="Q9SUM4-2"/>
    <property type="nucleotide sequence ID" value="NM_179140.2"/>
</dbReference>
<dbReference type="RefSeq" id="NP_974639.1">
    <molecule id="Q9SUM4-3"/>
    <property type="nucleotide sequence ID" value="NM_202910.4"/>
</dbReference>
<dbReference type="PDB" id="7O6V">
    <property type="method" value="X-ray"/>
    <property type="resolution" value="2.50 A"/>
    <property type="chains" value="A/B/C/D=616-692"/>
</dbReference>
<dbReference type="PDB" id="7O6W">
    <property type="method" value="X-ray"/>
    <property type="resolution" value="2.64 A"/>
    <property type="chains" value="A/B=621-689"/>
</dbReference>
<dbReference type="PDBsum" id="7O6V"/>
<dbReference type="PDBsum" id="7O6W"/>
<dbReference type="SMR" id="Q9SUM4"/>
<dbReference type="BioGRID" id="14430">
    <property type="interactions" value="2"/>
</dbReference>
<dbReference type="DIP" id="DIP-48609N"/>
<dbReference type="FunCoup" id="Q9SUM4">
    <property type="interactions" value="2250"/>
</dbReference>
<dbReference type="IntAct" id="Q9SUM4">
    <property type="interactions" value="3"/>
</dbReference>
<dbReference type="STRING" id="3702.Q9SUM4"/>
<dbReference type="iPTMnet" id="Q9SUM4"/>
<dbReference type="PaxDb" id="3702-AT4G30200.2"/>
<dbReference type="ProteomicsDB" id="243199">
    <molecule id="Q9SUM4-1"/>
</dbReference>
<dbReference type="EnsemblPlants" id="AT4G30200.1">
    <molecule id="Q9SUM4-2"/>
    <property type="protein sequence ID" value="AT4G30200.1"/>
    <property type="gene ID" value="AT4G30200"/>
</dbReference>
<dbReference type="EnsemblPlants" id="AT4G30200.2">
    <molecule id="Q9SUM4-1"/>
    <property type="protein sequence ID" value="AT4G30200.2"/>
    <property type="gene ID" value="AT4G30200"/>
</dbReference>
<dbReference type="EnsemblPlants" id="AT4G30200.3">
    <molecule id="Q9SUM4-3"/>
    <property type="protein sequence ID" value="AT4G30200.3"/>
    <property type="gene ID" value="AT4G30200"/>
</dbReference>
<dbReference type="EnsemblPlants" id="AT4G30200.4">
    <molecule id="Q9SUM4-4"/>
    <property type="protein sequence ID" value="AT4G30200.4"/>
    <property type="gene ID" value="AT4G30200"/>
</dbReference>
<dbReference type="GeneID" id="829143"/>
<dbReference type="Gramene" id="AT4G30200.1">
    <molecule id="Q9SUM4-2"/>
    <property type="protein sequence ID" value="AT4G30200.1"/>
    <property type="gene ID" value="AT4G30200"/>
</dbReference>
<dbReference type="Gramene" id="AT4G30200.2">
    <molecule id="Q9SUM4-1"/>
    <property type="protein sequence ID" value="AT4G30200.2"/>
    <property type="gene ID" value="AT4G30200"/>
</dbReference>
<dbReference type="Gramene" id="AT4G30200.3">
    <molecule id="Q9SUM4-3"/>
    <property type="protein sequence ID" value="AT4G30200.3"/>
    <property type="gene ID" value="AT4G30200"/>
</dbReference>
<dbReference type="Gramene" id="AT4G30200.4">
    <molecule id="Q9SUM4-4"/>
    <property type="protein sequence ID" value="AT4G30200.4"/>
    <property type="gene ID" value="AT4G30200"/>
</dbReference>
<dbReference type="KEGG" id="ath:AT4G30200"/>
<dbReference type="Araport" id="AT4G30200"/>
<dbReference type="TAIR" id="AT4G30200">
    <property type="gene designation" value="VEL1"/>
</dbReference>
<dbReference type="eggNOG" id="ENOG502QR8D">
    <property type="taxonomic scope" value="Eukaryota"/>
</dbReference>
<dbReference type="InParanoid" id="Q9SUM4"/>
<dbReference type="OMA" id="AGECEVT"/>
<dbReference type="PhylomeDB" id="Q9SUM4"/>
<dbReference type="PRO" id="PR:Q9SUM4"/>
<dbReference type="Proteomes" id="UP000006548">
    <property type="component" value="Chromosome 4"/>
</dbReference>
<dbReference type="ExpressionAtlas" id="Q9SUM4">
    <property type="expression patterns" value="baseline and differential"/>
</dbReference>
<dbReference type="GO" id="GO:0005677">
    <property type="term" value="C:chromatin silencing complex"/>
    <property type="evidence" value="ECO:0000314"/>
    <property type="project" value="UniProtKB"/>
</dbReference>
<dbReference type="GO" id="GO:0031519">
    <property type="term" value="C:PcG protein complex"/>
    <property type="evidence" value="ECO:0000314"/>
    <property type="project" value="TAIR"/>
</dbReference>
<dbReference type="GO" id="GO:0009506">
    <property type="term" value="C:plasmodesma"/>
    <property type="evidence" value="ECO:0007005"/>
    <property type="project" value="TAIR"/>
</dbReference>
<dbReference type="GO" id="GO:0003677">
    <property type="term" value="F:DNA binding"/>
    <property type="evidence" value="ECO:0007669"/>
    <property type="project" value="UniProtKB-KW"/>
</dbReference>
<dbReference type="GO" id="GO:0062072">
    <property type="term" value="F:histone H3K9me2/3 reader activity"/>
    <property type="evidence" value="ECO:0000314"/>
    <property type="project" value="GO_Central"/>
</dbReference>
<dbReference type="GO" id="GO:0042802">
    <property type="term" value="F:identical protein binding"/>
    <property type="evidence" value="ECO:0000314"/>
    <property type="project" value="UniProtKB"/>
</dbReference>
<dbReference type="GO" id="GO:0035064">
    <property type="term" value="F:methylated histone binding"/>
    <property type="evidence" value="ECO:0000314"/>
    <property type="project" value="TAIR"/>
</dbReference>
<dbReference type="GO" id="GO:0008270">
    <property type="term" value="F:zinc ion binding"/>
    <property type="evidence" value="ECO:0007669"/>
    <property type="project" value="UniProtKB-KW"/>
</dbReference>
<dbReference type="GO" id="GO:0032922">
    <property type="term" value="P:circadian regulation of gene expression"/>
    <property type="evidence" value="ECO:0000270"/>
    <property type="project" value="UniProtKB"/>
</dbReference>
<dbReference type="GO" id="GO:0140719">
    <property type="term" value="P:constitutive heterochromatin formation"/>
    <property type="evidence" value="ECO:0000314"/>
    <property type="project" value="UniProtKB"/>
</dbReference>
<dbReference type="GO" id="GO:0009908">
    <property type="term" value="P:flower development"/>
    <property type="evidence" value="ECO:0007669"/>
    <property type="project" value="UniProtKB-KW"/>
</dbReference>
<dbReference type="GO" id="GO:0048587">
    <property type="term" value="P:regulation of short-day photoperiodism, flowering"/>
    <property type="evidence" value="ECO:0000315"/>
    <property type="project" value="TAIR"/>
</dbReference>
<dbReference type="GO" id="GO:0009409">
    <property type="term" value="P:response to cold"/>
    <property type="evidence" value="ECO:0000270"/>
    <property type="project" value="UniProtKB"/>
</dbReference>
<dbReference type="GO" id="GO:0010228">
    <property type="term" value="P:vegetative to reproductive phase transition of meristem"/>
    <property type="evidence" value="ECO:0000353"/>
    <property type="project" value="TAIR"/>
</dbReference>
<dbReference type="GO" id="GO:0010048">
    <property type="term" value="P:vernalization response"/>
    <property type="evidence" value="ECO:0007669"/>
    <property type="project" value="InterPro"/>
</dbReference>
<dbReference type="CDD" id="cd00063">
    <property type="entry name" value="FN3"/>
    <property type="match status" value="1"/>
</dbReference>
<dbReference type="CDD" id="cd15521">
    <property type="entry name" value="PHD_VIN3_plant"/>
    <property type="match status" value="1"/>
</dbReference>
<dbReference type="Gene3D" id="2.60.40.10">
    <property type="entry name" value="Immunoglobulins"/>
    <property type="match status" value="1"/>
</dbReference>
<dbReference type="InterPro" id="IPR003961">
    <property type="entry name" value="FN3_dom"/>
</dbReference>
<dbReference type="InterPro" id="IPR036116">
    <property type="entry name" value="FN3_sf"/>
</dbReference>
<dbReference type="InterPro" id="IPR013783">
    <property type="entry name" value="Ig-like_fold"/>
</dbReference>
<dbReference type="InterPro" id="IPR032881">
    <property type="entry name" value="Oberon-like_PHD"/>
</dbReference>
<dbReference type="InterPro" id="IPR044514">
    <property type="entry name" value="VIN3-like"/>
</dbReference>
<dbReference type="InterPro" id="IPR056990">
    <property type="entry name" value="VIN3-like_C"/>
</dbReference>
<dbReference type="PANTHER" id="PTHR46286:SF2">
    <property type="entry name" value="VIN3-LIKE PROTEIN 2"/>
    <property type="match status" value="1"/>
</dbReference>
<dbReference type="PANTHER" id="PTHR46286">
    <property type="entry name" value="VIN3-LIKE PROTEIN 2-RELATED"/>
    <property type="match status" value="1"/>
</dbReference>
<dbReference type="Pfam" id="PF07227">
    <property type="entry name" value="PHD_Oberon"/>
    <property type="match status" value="1"/>
</dbReference>
<dbReference type="Pfam" id="PF23380">
    <property type="entry name" value="VIN3_C"/>
    <property type="match status" value="1"/>
</dbReference>
<dbReference type="SUPFAM" id="SSF49265">
    <property type="entry name" value="Fibronectin type III"/>
    <property type="match status" value="1"/>
</dbReference>
<dbReference type="PROSITE" id="PS50853">
    <property type="entry name" value="FN3"/>
    <property type="match status" value="1"/>
</dbReference>
<gene>
    <name type="primary">VIL2</name>
    <name type="synonym">VEL1</name>
    <name type="ordered locus">At4g30200</name>
    <name type="ORF">F9N11.50</name>
</gene>